<organism>
    <name type="scientific">Arabidopsis thaliana</name>
    <name type="common">Mouse-ear cress</name>
    <dbReference type="NCBI Taxonomy" id="3702"/>
    <lineage>
        <taxon>Eukaryota</taxon>
        <taxon>Viridiplantae</taxon>
        <taxon>Streptophyta</taxon>
        <taxon>Embryophyta</taxon>
        <taxon>Tracheophyta</taxon>
        <taxon>Spermatophyta</taxon>
        <taxon>Magnoliopsida</taxon>
        <taxon>eudicotyledons</taxon>
        <taxon>Gunneridae</taxon>
        <taxon>Pentapetalae</taxon>
        <taxon>rosids</taxon>
        <taxon>malvids</taxon>
        <taxon>Brassicales</taxon>
        <taxon>Brassicaceae</taxon>
        <taxon>Camelineae</taxon>
        <taxon>Arabidopsis</taxon>
    </lineage>
</organism>
<reference key="1">
    <citation type="journal article" date="2000" name="Nature">
        <title>Sequence and analysis of chromosome 1 of the plant Arabidopsis thaliana.</title>
        <authorList>
            <person name="Theologis A."/>
            <person name="Ecker J.R."/>
            <person name="Palm C.J."/>
            <person name="Federspiel N.A."/>
            <person name="Kaul S."/>
            <person name="White O."/>
            <person name="Alonso J."/>
            <person name="Altafi H."/>
            <person name="Araujo R."/>
            <person name="Bowman C.L."/>
            <person name="Brooks S.Y."/>
            <person name="Buehler E."/>
            <person name="Chan A."/>
            <person name="Chao Q."/>
            <person name="Chen H."/>
            <person name="Cheuk R.F."/>
            <person name="Chin C.W."/>
            <person name="Chung M.K."/>
            <person name="Conn L."/>
            <person name="Conway A.B."/>
            <person name="Conway A.R."/>
            <person name="Creasy T.H."/>
            <person name="Dewar K."/>
            <person name="Dunn P."/>
            <person name="Etgu P."/>
            <person name="Feldblyum T.V."/>
            <person name="Feng J.-D."/>
            <person name="Fong B."/>
            <person name="Fujii C.Y."/>
            <person name="Gill J.E."/>
            <person name="Goldsmith A.D."/>
            <person name="Haas B."/>
            <person name="Hansen N.F."/>
            <person name="Hughes B."/>
            <person name="Huizar L."/>
            <person name="Hunter J.L."/>
            <person name="Jenkins J."/>
            <person name="Johnson-Hopson C."/>
            <person name="Khan S."/>
            <person name="Khaykin E."/>
            <person name="Kim C.J."/>
            <person name="Koo H.L."/>
            <person name="Kremenetskaia I."/>
            <person name="Kurtz D.B."/>
            <person name="Kwan A."/>
            <person name="Lam B."/>
            <person name="Langin-Hooper S."/>
            <person name="Lee A."/>
            <person name="Lee J.M."/>
            <person name="Lenz C.A."/>
            <person name="Li J.H."/>
            <person name="Li Y.-P."/>
            <person name="Lin X."/>
            <person name="Liu S.X."/>
            <person name="Liu Z.A."/>
            <person name="Luros J.S."/>
            <person name="Maiti R."/>
            <person name="Marziali A."/>
            <person name="Militscher J."/>
            <person name="Miranda M."/>
            <person name="Nguyen M."/>
            <person name="Nierman W.C."/>
            <person name="Osborne B.I."/>
            <person name="Pai G."/>
            <person name="Peterson J."/>
            <person name="Pham P.K."/>
            <person name="Rizzo M."/>
            <person name="Rooney T."/>
            <person name="Rowley D."/>
            <person name="Sakano H."/>
            <person name="Salzberg S.L."/>
            <person name="Schwartz J.R."/>
            <person name="Shinn P."/>
            <person name="Southwick A.M."/>
            <person name="Sun H."/>
            <person name="Tallon L.J."/>
            <person name="Tambunga G."/>
            <person name="Toriumi M.J."/>
            <person name="Town C.D."/>
            <person name="Utterback T."/>
            <person name="Van Aken S."/>
            <person name="Vaysberg M."/>
            <person name="Vysotskaia V.S."/>
            <person name="Walker M."/>
            <person name="Wu D."/>
            <person name="Yu G."/>
            <person name="Fraser C.M."/>
            <person name="Venter J.C."/>
            <person name="Davis R.W."/>
        </authorList>
    </citation>
    <scope>NUCLEOTIDE SEQUENCE [LARGE SCALE GENOMIC DNA]</scope>
    <source>
        <strain>cv. Columbia</strain>
    </source>
</reference>
<reference key="2">
    <citation type="journal article" date="2017" name="Plant J.">
        <title>Araport11: a complete reannotation of the Arabidopsis thaliana reference genome.</title>
        <authorList>
            <person name="Cheng C.Y."/>
            <person name="Krishnakumar V."/>
            <person name="Chan A.P."/>
            <person name="Thibaud-Nissen F."/>
            <person name="Schobel S."/>
            <person name="Town C.D."/>
        </authorList>
    </citation>
    <scope>GENOME REANNOTATION</scope>
    <source>
        <strain>cv. Columbia</strain>
    </source>
</reference>
<reference key="3">
    <citation type="journal article" date="2003" name="Science">
        <title>Empirical analysis of transcriptional activity in the Arabidopsis genome.</title>
        <authorList>
            <person name="Yamada K."/>
            <person name="Lim J."/>
            <person name="Dale J.M."/>
            <person name="Chen H."/>
            <person name="Shinn P."/>
            <person name="Palm C.J."/>
            <person name="Southwick A.M."/>
            <person name="Wu H.C."/>
            <person name="Kim C.J."/>
            <person name="Nguyen M."/>
            <person name="Pham P.K."/>
            <person name="Cheuk R.F."/>
            <person name="Karlin-Newmann G."/>
            <person name="Liu S.X."/>
            <person name="Lam B."/>
            <person name="Sakano H."/>
            <person name="Wu T."/>
            <person name="Yu G."/>
            <person name="Miranda M."/>
            <person name="Quach H.L."/>
            <person name="Tripp M."/>
            <person name="Chang C.H."/>
            <person name="Lee J.M."/>
            <person name="Toriumi M.J."/>
            <person name="Chan M.M."/>
            <person name="Tang C.C."/>
            <person name="Onodera C.S."/>
            <person name="Deng J.M."/>
            <person name="Akiyama K."/>
            <person name="Ansari Y."/>
            <person name="Arakawa T."/>
            <person name="Banh J."/>
            <person name="Banno F."/>
            <person name="Bowser L."/>
            <person name="Brooks S.Y."/>
            <person name="Carninci P."/>
            <person name="Chao Q."/>
            <person name="Choy N."/>
            <person name="Enju A."/>
            <person name="Goldsmith A.D."/>
            <person name="Gurjal M."/>
            <person name="Hansen N.F."/>
            <person name="Hayashizaki Y."/>
            <person name="Johnson-Hopson C."/>
            <person name="Hsuan V.W."/>
            <person name="Iida K."/>
            <person name="Karnes M."/>
            <person name="Khan S."/>
            <person name="Koesema E."/>
            <person name="Ishida J."/>
            <person name="Jiang P.X."/>
            <person name="Jones T."/>
            <person name="Kawai J."/>
            <person name="Kamiya A."/>
            <person name="Meyers C."/>
            <person name="Nakajima M."/>
            <person name="Narusaka M."/>
            <person name="Seki M."/>
            <person name="Sakurai T."/>
            <person name="Satou M."/>
            <person name="Tamse R."/>
            <person name="Vaysberg M."/>
            <person name="Wallender E.K."/>
            <person name="Wong C."/>
            <person name="Yamamura Y."/>
            <person name="Yuan S."/>
            <person name="Shinozaki K."/>
            <person name="Davis R.W."/>
            <person name="Theologis A."/>
            <person name="Ecker J.R."/>
        </authorList>
    </citation>
    <scope>NUCLEOTIDE SEQUENCE [LARGE SCALE MRNA]</scope>
    <source>
        <strain>cv. Columbia</strain>
    </source>
</reference>
<reference key="4">
    <citation type="submission" date="2006-07" db="EMBL/GenBank/DDBJ databases">
        <title>Large-scale analysis of RIKEN Arabidopsis full-length (RAFL) cDNAs.</title>
        <authorList>
            <person name="Totoki Y."/>
            <person name="Seki M."/>
            <person name="Ishida J."/>
            <person name="Nakajima M."/>
            <person name="Enju A."/>
            <person name="Kamiya A."/>
            <person name="Narusaka M."/>
            <person name="Shin-i T."/>
            <person name="Nakagawa M."/>
            <person name="Sakamoto N."/>
            <person name="Oishi K."/>
            <person name="Kohara Y."/>
            <person name="Kobayashi M."/>
            <person name="Toyoda A."/>
            <person name="Sakaki Y."/>
            <person name="Sakurai T."/>
            <person name="Iida K."/>
            <person name="Akiyama K."/>
            <person name="Satou M."/>
            <person name="Toyoda T."/>
            <person name="Konagaya A."/>
            <person name="Carninci P."/>
            <person name="Kawai J."/>
            <person name="Hayashizaki Y."/>
            <person name="Shinozaki K."/>
        </authorList>
    </citation>
    <scope>NUCLEOTIDE SEQUENCE [LARGE SCALE MRNA]</scope>
    <source>
        <strain>cv. Columbia</strain>
    </source>
</reference>
<reference key="5">
    <citation type="journal article" date="2001" name="J. Biol. Chem.">
        <title>Phylogenetic analysis of the UDP-glycosyltransferase multigene family of Arabidopsis thaliana.</title>
        <authorList>
            <person name="Li Y."/>
            <person name="Baldauf S."/>
            <person name="Lim E.K."/>
            <person name="Bowles D.J."/>
        </authorList>
    </citation>
    <scope>GENE FAMILY</scope>
</reference>
<reference key="6">
    <citation type="journal article" date="2004" name="Biotechnol. Bioeng.">
        <title>Arabidopsis glycosyltransferases as biocatalysts in fermentation for regioselective synthesis of diverse quercetin glucosides.</title>
        <authorList>
            <person name="Lim E.K."/>
            <person name="Ashford D.A."/>
            <person name="Hou B."/>
            <person name="Jackson R.G."/>
            <person name="Bowles D.J."/>
        </authorList>
    </citation>
    <scope>FUNCTION</scope>
</reference>
<dbReference type="EC" id="2.4.1.-"/>
<dbReference type="EMBL" id="AC067971">
    <property type="protein sequence ID" value="AAF82195.1"/>
    <property type="molecule type" value="Genomic_DNA"/>
</dbReference>
<dbReference type="EMBL" id="CP002684">
    <property type="protein sequence ID" value="AEE28098.1"/>
    <property type="molecule type" value="Genomic_DNA"/>
</dbReference>
<dbReference type="EMBL" id="BT006479">
    <property type="protein sequence ID" value="AAP21287.1"/>
    <property type="molecule type" value="mRNA"/>
</dbReference>
<dbReference type="EMBL" id="AK228222">
    <property type="protein sequence ID" value="BAF00172.1"/>
    <property type="molecule type" value="mRNA"/>
</dbReference>
<dbReference type="PIR" id="H86207">
    <property type="entry name" value="H86207"/>
</dbReference>
<dbReference type="RefSeq" id="NP_172206.1">
    <property type="nucleotide sequence ID" value="NM_100600.4"/>
</dbReference>
<dbReference type="SMR" id="Q9LML7"/>
<dbReference type="FunCoup" id="Q9LML7">
    <property type="interactions" value="235"/>
</dbReference>
<dbReference type="STRING" id="3702.Q9LML7"/>
<dbReference type="CAZy" id="GT1">
    <property type="family name" value="Glycosyltransferase Family 1"/>
</dbReference>
<dbReference type="PaxDb" id="3702-AT1G07260.1"/>
<dbReference type="ProteomicsDB" id="243205"/>
<dbReference type="EnsemblPlants" id="AT1G07260.1">
    <property type="protein sequence ID" value="AT1G07260.1"/>
    <property type="gene ID" value="AT1G07260"/>
</dbReference>
<dbReference type="GeneID" id="837237"/>
<dbReference type="Gramene" id="AT1G07260.1">
    <property type="protein sequence ID" value="AT1G07260.1"/>
    <property type="gene ID" value="AT1G07260"/>
</dbReference>
<dbReference type="KEGG" id="ath:AT1G07260"/>
<dbReference type="Araport" id="AT1G07260"/>
<dbReference type="TAIR" id="AT1G07260">
    <property type="gene designation" value="UGT71C3"/>
</dbReference>
<dbReference type="eggNOG" id="KOG1192">
    <property type="taxonomic scope" value="Eukaryota"/>
</dbReference>
<dbReference type="HOGENOM" id="CLU_001724_3_2_1"/>
<dbReference type="InParanoid" id="Q9LML7"/>
<dbReference type="OMA" id="IPGYVCS"/>
<dbReference type="PhylomeDB" id="Q9LML7"/>
<dbReference type="BRENDA" id="2.4.1.128">
    <property type="organism ID" value="399"/>
</dbReference>
<dbReference type="PRO" id="PR:Q9LML7"/>
<dbReference type="Proteomes" id="UP000006548">
    <property type="component" value="Chromosome 1"/>
</dbReference>
<dbReference type="ExpressionAtlas" id="Q9LML7">
    <property type="expression patterns" value="baseline and differential"/>
</dbReference>
<dbReference type="GO" id="GO:0004134">
    <property type="term" value="F:4-alpha-glucanotransferase activity"/>
    <property type="evidence" value="ECO:0000314"/>
    <property type="project" value="TAIR"/>
</dbReference>
<dbReference type="GO" id="GO:0080043">
    <property type="term" value="F:quercetin 3-O-glucosyltransferase activity"/>
    <property type="evidence" value="ECO:0000314"/>
    <property type="project" value="TAIR"/>
</dbReference>
<dbReference type="GO" id="GO:0010113">
    <property type="term" value="P:negative regulation of systemic acquired resistance"/>
    <property type="evidence" value="ECO:0000315"/>
    <property type="project" value="TAIR"/>
</dbReference>
<dbReference type="CDD" id="cd03784">
    <property type="entry name" value="GT1_Gtf-like"/>
    <property type="match status" value="1"/>
</dbReference>
<dbReference type="FunFam" id="3.40.50.2000:FF:000056">
    <property type="entry name" value="Glycosyltransferase"/>
    <property type="match status" value="1"/>
</dbReference>
<dbReference type="FunFam" id="3.40.50.2000:FF:000080">
    <property type="entry name" value="Glycosyltransferase"/>
    <property type="match status" value="1"/>
</dbReference>
<dbReference type="Gene3D" id="3.40.50.2000">
    <property type="entry name" value="Glycogen Phosphorylase B"/>
    <property type="match status" value="2"/>
</dbReference>
<dbReference type="InterPro" id="IPR050481">
    <property type="entry name" value="UDP-glycosyltransf_plant"/>
</dbReference>
<dbReference type="InterPro" id="IPR002213">
    <property type="entry name" value="UDP_glucos_trans"/>
</dbReference>
<dbReference type="InterPro" id="IPR035595">
    <property type="entry name" value="UDP_glycos_trans_CS"/>
</dbReference>
<dbReference type="PANTHER" id="PTHR48048">
    <property type="entry name" value="GLYCOSYLTRANSFERASE"/>
    <property type="match status" value="1"/>
</dbReference>
<dbReference type="PANTHER" id="PTHR48048:SF45">
    <property type="entry name" value="GLYCOSYLTRANSFERASE"/>
    <property type="match status" value="1"/>
</dbReference>
<dbReference type="Pfam" id="PF00201">
    <property type="entry name" value="UDPGT"/>
    <property type="match status" value="1"/>
</dbReference>
<dbReference type="SUPFAM" id="SSF53756">
    <property type="entry name" value="UDP-Glycosyltransferase/glycogen phosphorylase"/>
    <property type="match status" value="1"/>
</dbReference>
<dbReference type="PROSITE" id="PS00375">
    <property type="entry name" value="UDPGT"/>
    <property type="match status" value="1"/>
</dbReference>
<feature type="chain" id="PRO_0000409055" description="UDP-glycosyltransferase 71C3">
    <location>
        <begin position="1"/>
        <end position="476"/>
    </location>
</feature>
<feature type="binding site" evidence="1">
    <location>
        <position position="290"/>
    </location>
    <ligand>
        <name>UDP-alpha-D-glucose</name>
        <dbReference type="ChEBI" id="CHEBI:58885"/>
    </ligand>
</feature>
<feature type="binding site" evidence="1">
    <location>
        <begin position="349"/>
        <end position="351"/>
    </location>
    <ligand>
        <name>UDP-alpha-D-glucose</name>
        <dbReference type="ChEBI" id="CHEBI:58885"/>
    </ligand>
</feature>
<feature type="binding site" evidence="1">
    <location>
        <begin position="366"/>
        <end position="374"/>
    </location>
    <ligand>
        <name>UDP-alpha-D-glucose</name>
        <dbReference type="ChEBI" id="CHEBI:58885"/>
    </ligand>
</feature>
<feature type="binding site" evidence="1">
    <location>
        <begin position="388"/>
        <end position="391"/>
    </location>
    <ligand>
        <name>UDP-alpha-D-glucose</name>
        <dbReference type="ChEBI" id="CHEBI:58885"/>
    </ligand>
</feature>
<evidence type="ECO:0000250" key="1"/>
<evidence type="ECO:0000269" key="2">
    <source>
    </source>
</evidence>
<evidence type="ECO:0000305" key="3"/>
<name>U71C3_ARATH</name>
<protein>
    <recommendedName>
        <fullName>UDP-glycosyltransferase 71C3</fullName>
        <ecNumber>2.4.1.-</ecNumber>
    </recommendedName>
</protein>
<sequence length="476" mass="52901">MKAEAEIIFVTYPSPGHLLVSIEFAKSLIKRDDRIHTITILYWALPLAPQAHLFAKSLVASQPRIRLLALPDVQNPPPLELFFKAPEAYILESTKKTVPLVRDALSTLVSSRKESGSVRVVGLVIDFFCVPMIEVANELNLPSYIFLTCNAGFLSMMKYLPERHRITTSELDLSSGNVEHPIPGYVCSVPTKVLPPGLFVRESYEAWVEIAEKFPGAKGILVNSVTCLEQNAFDYFARLDENYPPVYPVGPVLSLKDRPSPNLDASDRDRIMRWLEDQPESSIVYICFGSLGIIGKLQIEEIAEALELTGHRFLWSIRTNPTEKASPYDLLPEGFLDRTASKGLVCDWAPQVEVLAHKALGGFVSHCGWNSVLESLWFGVPIATWPMYAEQQLNAFSMVKELGLAVELRLDYVSAYGEIVKAEEIAGAIRSLMDGEDTPRKRVKEMAEAARNALMDGGSSFVAVKRFLDELIGGDV</sequence>
<keyword id="KW-0328">Glycosyltransferase</keyword>
<keyword id="KW-1185">Reference proteome</keyword>
<keyword id="KW-0808">Transferase</keyword>
<comment type="function">
    <text evidence="2">Possesses low quercetin 3-O-glucosyltransferase activity in vitro.</text>
</comment>
<comment type="similarity">
    <text evidence="3">Belongs to the UDP-glycosyltransferase family.</text>
</comment>
<gene>
    <name type="primary">UGT71C3</name>
    <name type="ordered locus">At1g07260</name>
    <name type="ORF">F10K1.3</name>
</gene>
<accession>Q9LML7</accession>
<proteinExistence type="evidence at transcript level"/>